<protein>
    <recommendedName>
        <fullName>DNA-directed RNA polymerase subunit alpha</fullName>
        <shortName>PEP</shortName>
        <ecNumber>2.7.7.6</ecNumber>
    </recommendedName>
    <alternativeName>
        <fullName>Plastid-encoded RNA polymerase subunit alpha</fullName>
        <shortName>RNA polymerase subunit alpha</shortName>
    </alternativeName>
</protein>
<accession>Q2EEW7</accession>
<reference key="1">
    <citation type="journal article" date="2006" name="BMC Biol.">
        <title>The complete plastid genome sequence of the parasitic green alga, Helicosporidium sp. is highly reduced and structured.</title>
        <authorList>
            <person name="de Koning A.P."/>
            <person name="Keeling P.J."/>
        </authorList>
    </citation>
    <scope>NUCLEOTIDE SEQUENCE [LARGE SCALE GENOMIC DNA]</scope>
</reference>
<sequence length="246" mass="28093">MLIKQLSSSYNEYNNNYAASFLIGPLPEGIAQSLGFNIRSVLLKEFPYFAVKNIRFNPENNNYKTHIGTKESIETIINTILGIDFNYSFDFYKAMGLYKSKPKALFQENLSKAKFLCSAKQVGEGILYAKDLMLPVGIKCTTPYKIIAHVTKQNFLGFTFELGFLFGLNNNIKFENKLYSIKTYPIQNINIEIINSKKSFNLNSESIILSFTTKSSLQPIDVIKILSYLLLNKHLILIKAFQQFLD</sequence>
<feature type="chain" id="PRO_0000296893" description="DNA-directed RNA polymerase subunit alpha">
    <location>
        <begin position="1"/>
        <end position="246"/>
    </location>
</feature>
<gene>
    <name type="primary">rpoA</name>
</gene>
<comment type="function">
    <text evidence="1">DNA-dependent RNA polymerase catalyzes the transcription of DNA into RNA using the four ribonucleoside triphosphates as substrates.</text>
</comment>
<comment type="catalytic activity">
    <reaction>
        <text>RNA(n) + a ribonucleoside 5'-triphosphate = RNA(n+1) + diphosphate</text>
        <dbReference type="Rhea" id="RHEA:21248"/>
        <dbReference type="Rhea" id="RHEA-COMP:14527"/>
        <dbReference type="Rhea" id="RHEA-COMP:17342"/>
        <dbReference type="ChEBI" id="CHEBI:33019"/>
        <dbReference type="ChEBI" id="CHEBI:61557"/>
        <dbReference type="ChEBI" id="CHEBI:140395"/>
        <dbReference type="EC" id="2.7.7.6"/>
    </reaction>
</comment>
<comment type="subunit">
    <text evidence="2">In plastids the minimal PEP RNA polymerase catalytic core is composed of four subunits: alpha, beta, beta', and beta''. When a (nuclear-encoded) sigma factor is associated with the core the holoenzyme is formed, which can initiate transcription (Potential).</text>
</comment>
<comment type="subcellular location">
    <subcellularLocation>
        <location>Plastid</location>
    </subcellularLocation>
</comment>
<comment type="similarity">
    <text evidence="2">Belongs to the RNA polymerase alpha chain family.</text>
</comment>
<evidence type="ECO:0000250" key="1"/>
<evidence type="ECO:0000305" key="2"/>
<organism>
    <name type="scientific">Helicosporidium sp. subsp. Simulium jonesii</name>
    <name type="common">Green alga</name>
    <dbReference type="NCBI Taxonomy" id="145475"/>
    <lineage>
        <taxon>Eukaryota</taxon>
        <taxon>Viridiplantae</taxon>
        <taxon>Chlorophyta</taxon>
        <taxon>core chlorophytes</taxon>
        <taxon>Trebouxiophyceae</taxon>
        <taxon>Chlorellales</taxon>
        <taxon>Chlorellaceae</taxon>
        <taxon>Helicosporidium</taxon>
    </lineage>
</organism>
<name>RPOA_HELSJ</name>
<geneLocation type="non-photosynthetic plastid"/>
<proteinExistence type="inferred from homology"/>
<keyword id="KW-0240">DNA-directed RNA polymerase</keyword>
<keyword id="KW-0548">Nucleotidyltransferase</keyword>
<keyword id="KW-0934">Plastid</keyword>
<keyword id="KW-0804">Transcription</keyword>
<keyword id="KW-0808">Transferase</keyword>
<dbReference type="EC" id="2.7.7.6"/>
<dbReference type="EMBL" id="DQ398104">
    <property type="protein sequence ID" value="ABD33975.1"/>
    <property type="molecule type" value="Genomic_DNA"/>
</dbReference>
<dbReference type="RefSeq" id="YP_635927.1">
    <property type="nucleotide sequence ID" value="NC_008100.1"/>
</dbReference>
<dbReference type="SMR" id="Q2EEW7"/>
<dbReference type="GeneID" id="4100421"/>
<dbReference type="GO" id="GO:0000428">
    <property type="term" value="C:DNA-directed RNA polymerase complex"/>
    <property type="evidence" value="ECO:0007669"/>
    <property type="project" value="UniProtKB-KW"/>
</dbReference>
<dbReference type="GO" id="GO:0005739">
    <property type="term" value="C:mitochondrion"/>
    <property type="evidence" value="ECO:0007669"/>
    <property type="project" value="GOC"/>
</dbReference>
<dbReference type="GO" id="GO:0009536">
    <property type="term" value="C:plastid"/>
    <property type="evidence" value="ECO:0007669"/>
    <property type="project" value="UniProtKB-SubCell"/>
</dbReference>
<dbReference type="GO" id="GO:0003899">
    <property type="term" value="F:DNA-directed RNA polymerase activity"/>
    <property type="evidence" value="ECO:0007669"/>
    <property type="project" value="UniProtKB-EC"/>
</dbReference>
<dbReference type="GO" id="GO:0046983">
    <property type="term" value="F:protein dimerization activity"/>
    <property type="evidence" value="ECO:0007669"/>
    <property type="project" value="InterPro"/>
</dbReference>
<dbReference type="GO" id="GO:0006351">
    <property type="term" value="P:DNA-templated transcription"/>
    <property type="evidence" value="ECO:0007669"/>
    <property type="project" value="InterPro"/>
</dbReference>
<dbReference type="Gene3D" id="2.170.120.12">
    <property type="entry name" value="DNA-directed RNA polymerase, insert domain"/>
    <property type="match status" value="1"/>
</dbReference>
<dbReference type="Gene3D" id="3.30.1360.10">
    <property type="entry name" value="RNA polymerase, RBP11-like subunit"/>
    <property type="match status" value="1"/>
</dbReference>
<dbReference type="InterPro" id="IPR036603">
    <property type="entry name" value="RBP11-like"/>
</dbReference>
<dbReference type="InterPro" id="IPR036643">
    <property type="entry name" value="RNApol_insert_sf"/>
</dbReference>
<dbReference type="SUPFAM" id="SSF56553">
    <property type="entry name" value="Insert subdomain of RNA polymerase alpha subunit"/>
    <property type="match status" value="1"/>
</dbReference>
<dbReference type="SUPFAM" id="SSF55257">
    <property type="entry name" value="RBP11-like subunits of RNA polymerase"/>
    <property type="match status" value="1"/>
</dbReference>